<evidence type="ECO:0000255" key="1">
    <source>
        <dbReference type="HAMAP-Rule" id="MF_01023"/>
    </source>
</evidence>
<feature type="chain" id="PRO_1000063461" description="Histidinol-phosphate aminotransferase">
    <location>
        <begin position="1"/>
        <end position="365"/>
    </location>
</feature>
<feature type="modified residue" description="N6-(pyridoxal phosphate)lysine" evidence="1">
    <location>
        <position position="223"/>
    </location>
</feature>
<name>HIS8_BACP2</name>
<comment type="catalytic activity">
    <reaction evidence="1">
        <text>L-histidinol phosphate + 2-oxoglutarate = 3-(imidazol-4-yl)-2-oxopropyl phosphate + L-glutamate</text>
        <dbReference type="Rhea" id="RHEA:23744"/>
        <dbReference type="ChEBI" id="CHEBI:16810"/>
        <dbReference type="ChEBI" id="CHEBI:29985"/>
        <dbReference type="ChEBI" id="CHEBI:57766"/>
        <dbReference type="ChEBI" id="CHEBI:57980"/>
        <dbReference type="EC" id="2.6.1.9"/>
    </reaction>
</comment>
<comment type="cofactor">
    <cofactor evidence="1">
        <name>pyridoxal 5'-phosphate</name>
        <dbReference type="ChEBI" id="CHEBI:597326"/>
    </cofactor>
</comment>
<comment type="pathway">
    <text evidence="1">Amino-acid biosynthesis; L-histidine biosynthesis; L-histidine from 5-phospho-alpha-D-ribose 1-diphosphate: step 7/9.</text>
</comment>
<comment type="subunit">
    <text evidence="1">Homodimer.</text>
</comment>
<comment type="similarity">
    <text evidence="1">Belongs to the class-II pyridoxal-phosphate-dependent aminotransferase family. Histidinol-phosphate aminotransferase subfamily.</text>
</comment>
<reference key="1">
    <citation type="journal article" date="2007" name="PLoS ONE">
        <title>Paradoxical DNA repair and peroxide resistance gene conservation in Bacillus pumilus SAFR-032.</title>
        <authorList>
            <person name="Gioia J."/>
            <person name="Yerrapragada S."/>
            <person name="Qin X."/>
            <person name="Jiang H."/>
            <person name="Igboeli O.C."/>
            <person name="Muzny D."/>
            <person name="Dugan-Rocha S."/>
            <person name="Ding Y."/>
            <person name="Hawes A."/>
            <person name="Liu W."/>
            <person name="Perez L."/>
            <person name="Kovar C."/>
            <person name="Dinh H."/>
            <person name="Lee S."/>
            <person name="Nazareth L."/>
            <person name="Blyth P."/>
            <person name="Holder M."/>
            <person name="Buhay C."/>
            <person name="Tirumalai M.R."/>
            <person name="Liu Y."/>
            <person name="Dasgupta I."/>
            <person name="Bokhetache L."/>
            <person name="Fujita M."/>
            <person name="Karouia F."/>
            <person name="Eswara Moorthy P."/>
            <person name="Siefert J."/>
            <person name="Uzman A."/>
            <person name="Buzumbo P."/>
            <person name="Verma A."/>
            <person name="Zwiya H."/>
            <person name="McWilliams B.D."/>
            <person name="Olowu A."/>
            <person name="Clinkenbeard K.D."/>
            <person name="Newcombe D."/>
            <person name="Golebiewski L."/>
            <person name="Petrosino J.F."/>
            <person name="Nicholson W.L."/>
            <person name="Fox G.E."/>
            <person name="Venkateswaran K."/>
            <person name="Highlander S.K."/>
            <person name="Weinstock G.M."/>
        </authorList>
    </citation>
    <scope>NUCLEOTIDE SEQUENCE [LARGE SCALE GENOMIC DNA]</scope>
    <source>
        <strain>SAFR-032</strain>
    </source>
</reference>
<dbReference type="EC" id="2.6.1.9" evidence="1"/>
<dbReference type="EMBL" id="CP000813">
    <property type="protein sequence ID" value="ABV62663.1"/>
    <property type="molecule type" value="Genomic_DNA"/>
</dbReference>
<dbReference type="RefSeq" id="WP_012010374.1">
    <property type="nucleotide sequence ID" value="NC_009848.4"/>
</dbReference>
<dbReference type="SMR" id="A8FEJ6"/>
<dbReference type="STRING" id="315750.BPUM_1993"/>
<dbReference type="GeneID" id="5621259"/>
<dbReference type="KEGG" id="bpu:BPUM_1993"/>
<dbReference type="eggNOG" id="COG0079">
    <property type="taxonomic scope" value="Bacteria"/>
</dbReference>
<dbReference type="HOGENOM" id="CLU_017584_3_3_9"/>
<dbReference type="OrthoDB" id="9813612at2"/>
<dbReference type="UniPathway" id="UPA00031">
    <property type="reaction ID" value="UER00012"/>
</dbReference>
<dbReference type="Proteomes" id="UP000001355">
    <property type="component" value="Chromosome"/>
</dbReference>
<dbReference type="GO" id="GO:0004400">
    <property type="term" value="F:histidinol-phosphate transaminase activity"/>
    <property type="evidence" value="ECO:0007669"/>
    <property type="project" value="UniProtKB-UniRule"/>
</dbReference>
<dbReference type="GO" id="GO:0030170">
    <property type="term" value="F:pyridoxal phosphate binding"/>
    <property type="evidence" value="ECO:0007669"/>
    <property type="project" value="InterPro"/>
</dbReference>
<dbReference type="GO" id="GO:0000105">
    <property type="term" value="P:L-histidine biosynthetic process"/>
    <property type="evidence" value="ECO:0007669"/>
    <property type="project" value="UniProtKB-UniRule"/>
</dbReference>
<dbReference type="CDD" id="cd00609">
    <property type="entry name" value="AAT_like"/>
    <property type="match status" value="1"/>
</dbReference>
<dbReference type="Gene3D" id="3.90.1150.10">
    <property type="entry name" value="Aspartate Aminotransferase, domain 1"/>
    <property type="match status" value="1"/>
</dbReference>
<dbReference type="Gene3D" id="3.40.640.10">
    <property type="entry name" value="Type I PLP-dependent aspartate aminotransferase-like (Major domain)"/>
    <property type="match status" value="1"/>
</dbReference>
<dbReference type="HAMAP" id="MF_01023">
    <property type="entry name" value="HisC_aminotrans_2"/>
    <property type="match status" value="1"/>
</dbReference>
<dbReference type="InterPro" id="IPR001917">
    <property type="entry name" value="Aminotrans_II_pyridoxalP_BS"/>
</dbReference>
<dbReference type="InterPro" id="IPR004839">
    <property type="entry name" value="Aminotransferase_I/II_large"/>
</dbReference>
<dbReference type="InterPro" id="IPR005861">
    <property type="entry name" value="HisP_aminotrans"/>
</dbReference>
<dbReference type="InterPro" id="IPR050106">
    <property type="entry name" value="HistidinolP_aminotransfase"/>
</dbReference>
<dbReference type="InterPro" id="IPR015424">
    <property type="entry name" value="PyrdxlP-dep_Trfase"/>
</dbReference>
<dbReference type="InterPro" id="IPR015421">
    <property type="entry name" value="PyrdxlP-dep_Trfase_major"/>
</dbReference>
<dbReference type="InterPro" id="IPR015422">
    <property type="entry name" value="PyrdxlP-dep_Trfase_small"/>
</dbReference>
<dbReference type="NCBIfam" id="TIGR01141">
    <property type="entry name" value="hisC"/>
    <property type="match status" value="1"/>
</dbReference>
<dbReference type="PANTHER" id="PTHR43643:SF3">
    <property type="entry name" value="HISTIDINOL-PHOSPHATE AMINOTRANSFERASE"/>
    <property type="match status" value="1"/>
</dbReference>
<dbReference type="PANTHER" id="PTHR43643">
    <property type="entry name" value="HISTIDINOL-PHOSPHATE AMINOTRANSFERASE 2"/>
    <property type="match status" value="1"/>
</dbReference>
<dbReference type="Pfam" id="PF00155">
    <property type="entry name" value="Aminotran_1_2"/>
    <property type="match status" value="1"/>
</dbReference>
<dbReference type="SUPFAM" id="SSF53383">
    <property type="entry name" value="PLP-dependent transferases"/>
    <property type="match status" value="1"/>
</dbReference>
<dbReference type="PROSITE" id="PS00599">
    <property type="entry name" value="AA_TRANSFER_CLASS_2"/>
    <property type="match status" value="1"/>
</dbReference>
<organism>
    <name type="scientific">Bacillus pumilus (strain SAFR-032)</name>
    <dbReference type="NCBI Taxonomy" id="315750"/>
    <lineage>
        <taxon>Bacteria</taxon>
        <taxon>Bacillati</taxon>
        <taxon>Bacillota</taxon>
        <taxon>Bacilli</taxon>
        <taxon>Bacillales</taxon>
        <taxon>Bacillaceae</taxon>
        <taxon>Bacillus</taxon>
    </lineage>
</organism>
<proteinExistence type="inferred from homology"/>
<keyword id="KW-0028">Amino-acid biosynthesis</keyword>
<keyword id="KW-0032">Aminotransferase</keyword>
<keyword id="KW-0368">Histidine biosynthesis</keyword>
<keyword id="KW-0663">Pyridoxal phosphate</keyword>
<keyword id="KW-0808">Transferase</keyword>
<accession>A8FEJ6</accession>
<protein>
    <recommendedName>
        <fullName evidence="1">Histidinol-phosphate aminotransferase</fullName>
        <ecNumber evidence="1">2.6.1.9</ecNumber>
    </recommendedName>
    <alternativeName>
        <fullName evidence="1">Imidazole acetol-phosphate transaminase</fullName>
    </alternativeName>
</protein>
<sequence>MHIKDQLKQLKPYQPGKPIEEVKKEYQLDKIVKLASNENPFGCSTHAREAIQAELEHLAIYPDGYSASLRTELAEFLQVNEKQLIFGNGSDELVQIIARAFLDQHTNTVIPSPSFPQYRHNAIIEQAEIREVSLLDGGAHDLKGMLDEIDENTKVVWVCNPNNPTGNHLSESELVAFLDQVPAHVLVVLDEAYVEYVRAEDYPNSLSLLHSYQNVIVLRTFSKAYGLAALRVGYGIASEELITAIEPAREPFNTSRIAQAAARAAIKDQDFIQSCRQKNEAGLKQYQEFADRFGLFIYPSQTNFVLIDFKRDADELFHALLKKGYIVRSGKVLGFPTSLRITVGTMEQNAEILSTLADLLQGIRA</sequence>
<gene>
    <name evidence="1" type="primary">hisC</name>
    <name type="ordered locus">BPUM_1993</name>
</gene>